<protein>
    <recommendedName>
        <fullName evidence="1">Ribulose bisphosphate carboxylase large chain</fullName>
        <shortName evidence="1">RuBisCO large subunit</shortName>
        <ecNumber evidence="1">4.1.1.39</ecNumber>
    </recommendedName>
</protein>
<gene>
    <name evidence="1" type="primary">rbcL</name>
</gene>
<name>RBL_EUCLU</name>
<feature type="chain" id="PRO_0000062463" description="Ribulose bisphosphate carboxylase large chain">
    <location>
        <begin position="1" status="less than"/>
        <end position="448" status="greater than"/>
    </location>
</feature>
<feature type="active site" description="Proton acceptor" evidence="1">
    <location>
        <position position="165"/>
    </location>
</feature>
<feature type="active site" description="Proton acceptor" evidence="1">
    <location>
        <position position="284"/>
    </location>
</feature>
<feature type="binding site" description="in homodimeric partner" evidence="1">
    <location>
        <position position="113"/>
    </location>
    <ligand>
        <name>substrate</name>
    </ligand>
</feature>
<feature type="binding site" evidence="1">
    <location>
        <position position="163"/>
    </location>
    <ligand>
        <name>substrate</name>
    </ligand>
</feature>
<feature type="binding site" evidence="1">
    <location>
        <position position="167"/>
    </location>
    <ligand>
        <name>substrate</name>
    </ligand>
</feature>
<feature type="binding site" description="via carbamate group" evidence="1">
    <location>
        <position position="191"/>
    </location>
    <ligand>
        <name>Mg(2+)</name>
        <dbReference type="ChEBI" id="CHEBI:18420"/>
    </ligand>
</feature>
<feature type="binding site" evidence="1">
    <location>
        <position position="193"/>
    </location>
    <ligand>
        <name>Mg(2+)</name>
        <dbReference type="ChEBI" id="CHEBI:18420"/>
    </ligand>
</feature>
<feature type="binding site" evidence="1">
    <location>
        <position position="194"/>
    </location>
    <ligand>
        <name>Mg(2+)</name>
        <dbReference type="ChEBI" id="CHEBI:18420"/>
    </ligand>
</feature>
<feature type="binding site" evidence="1">
    <location>
        <position position="285"/>
    </location>
    <ligand>
        <name>substrate</name>
    </ligand>
</feature>
<feature type="binding site" evidence="1">
    <location>
        <position position="317"/>
    </location>
    <ligand>
        <name>substrate</name>
    </ligand>
</feature>
<feature type="binding site" evidence="1">
    <location>
        <position position="369"/>
    </location>
    <ligand>
        <name>substrate</name>
    </ligand>
</feature>
<feature type="site" description="Transition state stabilizer" evidence="1">
    <location>
        <position position="324"/>
    </location>
</feature>
<feature type="modified residue" description="N6,N6,N6-trimethyllysine" evidence="1">
    <location>
        <position position="4"/>
    </location>
</feature>
<feature type="modified residue" description="N6-carboxylysine" evidence="1">
    <location>
        <position position="191"/>
    </location>
</feature>
<feature type="disulfide bond" description="Interchain; in linked form" evidence="1">
    <location>
        <position position="237"/>
    </location>
</feature>
<feature type="non-terminal residue">
    <location>
        <position position="1"/>
    </location>
</feature>
<feature type="non-terminal residue">
    <location>
        <position position="448"/>
    </location>
</feature>
<reference key="1">
    <citation type="journal article" date="1990" name="Proc. Natl. Acad. Sci. U.S.A.">
        <title>rbcL sequence divergence and phylogenetic relationships in Saxifragaceae sensu lato.</title>
        <authorList>
            <person name="Soltis D.E."/>
            <person name="Soltis P.S."/>
            <person name="Clegg M.T."/>
            <person name="Durbin M."/>
        </authorList>
    </citation>
    <scope>NUCLEOTIDE SEQUENCE [GENOMIC DNA]</scope>
</reference>
<reference key="2">
    <citation type="journal article" date="1992" name="Science">
        <title>Carnivorous plants: phylogeny and structural evolution.</title>
        <authorList>
            <person name="Albert V.A."/>
            <person name="Williams S.E."/>
            <person name="Chase M.W."/>
        </authorList>
    </citation>
    <scope>NUCLEOTIDE SEQUENCE [GENOMIC DNA]</scope>
</reference>
<proteinExistence type="inferred from homology"/>
<dbReference type="EC" id="4.1.1.39" evidence="1"/>
<dbReference type="EMBL" id="L01918">
    <property type="protein sequence ID" value="AAA84246.2"/>
    <property type="molecule type" value="Genomic_DNA"/>
</dbReference>
<dbReference type="PIR" id="T01639">
    <property type="entry name" value="T01639"/>
</dbReference>
<dbReference type="SMR" id="P28414"/>
<dbReference type="GO" id="GO:0009507">
    <property type="term" value="C:chloroplast"/>
    <property type="evidence" value="ECO:0007669"/>
    <property type="project" value="UniProtKB-SubCell"/>
</dbReference>
<dbReference type="GO" id="GO:0000287">
    <property type="term" value="F:magnesium ion binding"/>
    <property type="evidence" value="ECO:0007669"/>
    <property type="project" value="InterPro"/>
</dbReference>
<dbReference type="GO" id="GO:0004497">
    <property type="term" value="F:monooxygenase activity"/>
    <property type="evidence" value="ECO:0007669"/>
    <property type="project" value="UniProtKB-KW"/>
</dbReference>
<dbReference type="GO" id="GO:0016984">
    <property type="term" value="F:ribulose-bisphosphate carboxylase activity"/>
    <property type="evidence" value="ECO:0007669"/>
    <property type="project" value="UniProtKB-EC"/>
</dbReference>
<dbReference type="GO" id="GO:0009853">
    <property type="term" value="P:photorespiration"/>
    <property type="evidence" value="ECO:0007669"/>
    <property type="project" value="UniProtKB-KW"/>
</dbReference>
<dbReference type="GO" id="GO:0019253">
    <property type="term" value="P:reductive pentose-phosphate cycle"/>
    <property type="evidence" value="ECO:0007669"/>
    <property type="project" value="UniProtKB-KW"/>
</dbReference>
<dbReference type="CDD" id="cd08212">
    <property type="entry name" value="RuBisCO_large_I"/>
    <property type="match status" value="1"/>
</dbReference>
<dbReference type="FunFam" id="3.20.20.110:FF:000001">
    <property type="entry name" value="Ribulose bisphosphate carboxylase large chain"/>
    <property type="match status" value="1"/>
</dbReference>
<dbReference type="FunFam" id="3.30.70.150:FF:000001">
    <property type="entry name" value="Ribulose bisphosphate carboxylase large chain"/>
    <property type="match status" value="1"/>
</dbReference>
<dbReference type="Gene3D" id="3.20.20.110">
    <property type="entry name" value="Ribulose bisphosphate carboxylase, large subunit, C-terminal domain"/>
    <property type="match status" value="1"/>
</dbReference>
<dbReference type="Gene3D" id="3.30.70.150">
    <property type="entry name" value="RuBisCO large subunit, N-terminal domain"/>
    <property type="match status" value="1"/>
</dbReference>
<dbReference type="HAMAP" id="MF_01338">
    <property type="entry name" value="RuBisCO_L_type1"/>
    <property type="match status" value="1"/>
</dbReference>
<dbReference type="InterPro" id="IPR033966">
    <property type="entry name" value="RuBisCO"/>
</dbReference>
<dbReference type="InterPro" id="IPR020878">
    <property type="entry name" value="RuBisCo_large_chain_AS"/>
</dbReference>
<dbReference type="InterPro" id="IPR000685">
    <property type="entry name" value="RuBisCO_lsu_C"/>
</dbReference>
<dbReference type="InterPro" id="IPR036376">
    <property type="entry name" value="RuBisCO_lsu_C_sf"/>
</dbReference>
<dbReference type="InterPro" id="IPR017443">
    <property type="entry name" value="RuBisCO_lsu_fd_N"/>
</dbReference>
<dbReference type="InterPro" id="IPR036422">
    <property type="entry name" value="RuBisCO_lsu_N_sf"/>
</dbReference>
<dbReference type="InterPro" id="IPR020888">
    <property type="entry name" value="RuBisCO_lsuI"/>
</dbReference>
<dbReference type="NCBIfam" id="NF003252">
    <property type="entry name" value="PRK04208.1"/>
    <property type="match status" value="1"/>
</dbReference>
<dbReference type="PANTHER" id="PTHR42704">
    <property type="entry name" value="RIBULOSE BISPHOSPHATE CARBOXYLASE"/>
    <property type="match status" value="1"/>
</dbReference>
<dbReference type="PANTHER" id="PTHR42704:SF15">
    <property type="entry name" value="RIBULOSE BISPHOSPHATE CARBOXYLASE LARGE CHAIN"/>
    <property type="match status" value="1"/>
</dbReference>
<dbReference type="Pfam" id="PF00016">
    <property type="entry name" value="RuBisCO_large"/>
    <property type="match status" value="1"/>
</dbReference>
<dbReference type="Pfam" id="PF02788">
    <property type="entry name" value="RuBisCO_large_N"/>
    <property type="match status" value="1"/>
</dbReference>
<dbReference type="SFLD" id="SFLDG01052">
    <property type="entry name" value="RuBisCO"/>
    <property type="match status" value="1"/>
</dbReference>
<dbReference type="SFLD" id="SFLDS00014">
    <property type="entry name" value="RuBisCO"/>
    <property type="match status" value="1"/>
</dbReference>
<dbReference type="SFLD" id="SFLDG00301">
    <property type="entry name" value="RuBisCO-like_proteins"/>
    <property type="match status" value="1"/>
</dbReference>
<dbReference type="SUPFAM" id="SSF51649">
    <property type="entry name" value="RuBisCo, C-terminal domain"/>
    <property type="match status" value="1"/>
</dbReference>
<dbReference type="SUPFAM" id="SSF54966">
    <property type="entry name" value="RuBisCO, large subunit, small (N-terminal) domain"/>
    <property type="match status" value="1"/>
</dbReference>
<dbReference type="PROSITE" id="PS00157">
    <property type="entry name" value="RUBISCO_LARGE"/>
    <property type="match status" value="1"/>
</dbReference>
<sequence length="448" mass="49494">VGFKAGVKDYKLTYYTPDYETKDTDILAAFRVSPQPGVPPEEAGAAVAAESSTGTWTTVWTDGLTSLDRYKGRCYHIEPVAGEENQYIAYVAYPLDLFEEGSVTNMFTSIVGNVFGFKALRALRLEDLRIPPAYAKTFQGPPHGIQVERDKLNKYGRPLLGCTIKPKLGLSAKNYGRAVYECLRGGLDFTKDDENVNSQPFMRWRDRFLFCAEAIYKAQAETGEIKGHYLNATAGTCEEMIKRAVFARELGVPIVMHDYLTGGFTANTSLAHYCRDNGLLLHIHRAMHAVIDRQKNHGIHFRVLAKALRMSGGDHIHSGTVVGKLEGEREITLGFVDLLRDDFIEKDRSRGIYFTQDWVSLPGVLPVASGGIHVWHMPALTEIFGDDSVLQFGGGTLGHPWGNAPGAVANRVALEACVQARNEGRDLAREGNEIIREASKWSPELAAA</sequence>
<comment type="function">
    <text evidence="1">RuBisCO catalyzes two reactions: the carboxylation of D-ribulose 1,5-bisphosphate, the primary event in carbon dioxide fixation, as well as the oxidative fragmentation of the pentose substrate in the photorespiration process. Both reactions occur simultaneously and in competition at the same active site.</text>
</comment>
<comment type="catalytic activity">
    <reaction evidence="1">
        <text>2 (2R)-3-phosphoglycerate + 2 H(+) = D-ribulose 1,5-bisphosphate + CO2 + H2O</text>
        <dbReference type="Rhea" id="RHEA:23124"/>
        <dbReference type="ChEBI" id="CHEBI:15377"/>
        <dbReference type="ChEBI" id="CHEBI:15378"/>
        <dbReference type="ChEBI" id="CHEBI:16526"/>
        <dbReference type="ChEBI" id="CHEBI:57870"/>
        <dbReference type="ChEBI" id="CHEBI:58272"/>
        <dbReference type="EC" id="4.1.1.39"/>
    </reaction>
</comment>
<comment type="catalytic activity">
    <reaction evidence="1">
        <text>D-ribulose 1,5-bisphosphate + O2 = 2-phosphoglycolate + (2R)-3-phosphoglycerate + 2 H(+)</text>
        <dbReference type="Rhea" id="RHEA:36631"/>
        <dbReference type="ChEBI" id="CHEBI:15378"/>
        <dbReference type="ChEBI" id="CHEBI:15379"/>
        <dbReference type="ChEBI" id="CHEBI:57870"/>
        <dbReference type="ChEBI" id="CHEBI:58033"/>
        <dbReference type="ChEBI" id="CHEBI:58272"/>
    </reaction>
</comment>
<comment type="cofactor">
    <cofactor evidence="1">
        <name>Mg(2+)</name>
        <dbReference type="ChEBI" id="CHEBI:18420"/>
    </cofactor>
    <text evidence="1">Binds 1 Mg(2+) ion per subunit.</text>
</comment>
<comment type="subunit">
    <text evidence="1">Heterohexadecamer of 8 large chains and 8 small chains; disulfide-linked. The disulfide link is formed within the large subunit homodimers.</text>
</comment>
<comment type="subcellular location">
    <subcellularLocation>
        <location>Plastid</location>
        <location>Chloroplast</location>
    </subcellularLocation>
</comment>
<comment type="PTM">
    <text evidence="1">The disulfide bond which can form in the large chain dimeric partners within the hexadecamer appears to be associated with oxidative stress and protein turnover.</text>
</comment>
<comment type="miscellaneous">
    <text evidence="1">The basic functional RuBisCO is composed of a large chain homodimer in a 'head-to-tail' conformation. In form I RuBisCO this homodimer is arranged in a barrel-like tetramer with the small subunits forming a tetrameric 'cap' on each end of the 'barrel'.</text>
</comment>
<comment type="similarity">
    <text evidence="1">Belongs to the RuBisCO large chain family. Type I subfamily.</text>
</comment>
<organism>
    <name type="scientific">Eucryphia lucida</name>
    <name type="common">Leatherwood</name>
    <dbReference type="NCBI Taxonomy" id="3791"/>
    <lineage>
        <taxon>Eukaryota</taxon>
        <taxon>Viridiplantae</taxon>
        <taxon>Streptophyta</taxon>
        <taxon>Embryophyta</taxon>
        <taxon>Tracheophyta</taxon>
        <taxon>Spermatophyta</taxon>
        <taxon>Magnoliopsida</taxon>
        <taxon>eudicotyledons</taxon>
        <taxon>Gunneridae</taxon>
        <taxon>Pentapetalae</taxon>
        <taxon>rosids</taxon>
        <taxon>fabids</taxon>
        <taxon>Oxalidales</taxon>
        <taxon>Cunoniaceae</taxon>
        <taxon>Eucryphia</taxon>
    </lineage>
</organism>
<geneLocation type="chloroplast"/>
<keyword id="KW-0113">Calvin cycle</keyword>
<keyword id="KW-0120">Carbon dioxide fixation</keyword>
<keyword id="KW-0150">Chloroplast</keyword>
<keyword id="KW-1015">Disulfide bond</keyword>
<keyword id="KW-0456">Lyase</keyword>
<keyword id="KW-0460">Magnesium</keyword>
<keyword id="KW-0479">Metal-binding</keyword>
<keyword id="KW-0488">Methylation</keyword>
<keyword id="KW-0503">Monooxygenase</keyword>
<keyword id="KW-0560">Oxidoreductase</keyword>
<keyword id="KW-0601">Photorespiration</keyword>
<keyword id="KW-0602">Photosynthesis</keyword>
<keyword id="KW-0934">Plastid</keyword>
<accession>P28414</accession>
<evidence type="ECO:0000255" key="1">
    <source>
        <dbReference type="HAMAP-Rule" id="MF_01338"/>
    </source>
</evidence>